<keyword id="KW-0749">Sporulation</keyword>
<keyword id="KW-0800">Toxin</keyword>
<keyword id="KW-0843">Virulence</keyword>
<evidence type="ECO:0000305" key="1"/>
<accession>Q45748</accession>
<proteinExistence type="evidence at transcript level"/>
<gene>
    <name type="primary">cry1Ha</name>
    <name type="synonym">cryIH(a)</name>
</gene>
<name>CR1HA_BACTU</name>
<reference key="1">
    <citation type="submission" date="1993-04" db="EMBL/GenBank/DDBJ databases">
        <authorList>
            <person name="Lambert B."/>
        </authorList>
    </citation>
    <scope>NUCLEOTIDE SEQUENCE [GENOMIC DNA]</scope>
    <source>
        <strain>BTS02069AA</strain>
    </source>
</reference>
<protein>
    <recommendedName>
        <fullName>Pesticidal crystal protein Cry1Ha</fullName>
    </recommendedName>
    <alternativeName>
        <fullName>133 kDa crystal protein</fullName>
    </alternativeName>
    <alternativeName>
        <fullName>Crystaline entomocidal protoxin</fullName>
    </alternativeName>
    <alternativeName>
        <fullName>Insecticidal delta-endotoxin CryIH(a)</fullName>
    </alternativeName>
</protein>
<comment type="function">
    <text>Promotes colloidosmotic lysis by binding to the midgut epithelial cells of insects.</text>
</comment>
<comment type="developmental stage">
    <text>The crystal protein is produced during sporulation and is accumulated both as an inclusion and as part of the spore coat.</text>
</comment>
<comment type="miscellaneous">
    <text>Toxic segment of the protein is located in the N-terminus.</text>
</comment>
<comment type="similarity">
    <text evidence="1">Belongs to the delta endotoxin family.</text>
</comment>
<feature type="chain" id="PRO_0000174046" description="Pesticidal crystal protein Cry1Ha">
    <location>
        <begin position="1"/>
        <end position="1172"/>
    </location>
</feature>
<dbReference type="EMBL" id="Z22513">
    <property type="protein sequence ID" value="CAA80236.1"/>
    <property type="molecule type" value="Genomic_DNA"/>
</dbReference>
<dbReference type="PIR" id="S32689">
    <property type="entry name" value="S32689"/>
</dbReference>
<dbReference type="SMR" id="Q45748"/>
<dbReference type="GO" id="GO:0005102">
    <property type="term" value="F:signaling receptor binding"/>
    <property type="evidence" value="ECO:0007669"/>
    <property type="project" value="InterPro"/>
</dbReference>
<dbReference type="GO" id="GO:0090729">
    <property type="term" value="F:toxin activity"/>
    <property type="evidence" value="ECO:0007669"/>
    <property type="project" value="UniProtKB-KW"/>
</dbReference>
<dbReference type="GO" id="GO:0030435">
    <property type="term" value="P:sporulation resulting in formation of a cellular spore"/>
    <property type="evidence" value="ECO:0007669"/>
    <property type="project" value="UniProtKB-KW"/>
</dbReference>
<dbReference type="GO" id="GO:0001907">
    <property type="term" value="P:symbiont-mediated killing of host cell"/>
    <property type="evidence" value="ECO:0007669"/>
    <property type="project" value="InterPro"/>
</dbReference>
<dbReference type="CDD" id="cd04085">
    <property type="entry name" value="delta_endotoxin_C"/>
    <property type="match status" value="1"/>
</dbReference>
<dbReference type="Gene3D" id="2.60.120.260">
    <property type="entry name" value="Galactose-binding domain-like"/>
    <property type="match status" value="2"/>
</dbReference>
<dbReference type="Gene3D" id="2.100.10.10">
    <property type="entry name" value="Pesticidal crystal protein, central domain"/>
    <property type="match status" value="1"/>
</dbReference>
<dbReference type="Gene3D" id="1.20.190.10">
    <property type="entry name" value="Pesticidal crystal protein, N-terminal domain"/>
    <property type="match status" value="1"/>
</dbReference>
<dbReference type="InterPro" id="IPR048645">
    <property type="entry name" value="Cry1Ac-like_dom-VII"/>
</dbReference>
<dbReference type="InterPro" id="IPR041587">
    <property type="entry name" value="Cry_V"/>
</dbReference>
<dbReference type="InterPro" id="IPR008979">
    <property type="entry name" value="Galactose-bd-like_sf"/>
</dbReference>
<dbReference type="InterPro" id="IPR038979">
    <property type="entry name" value="Pest_crys"/>
</dbReference>
<dbReference type="InterPro" id="IPR054544">
    <property type="entry name" value="Pest_crys_Cry1Aa_dom-IV"/>
</dbReference>
<dbReference type="InterPro" id="IPR005638">
    <property type="entry name" value="Pest_crys_dom-III"/>
</dbReference>
<dbReference type="InterPro" id="IPR005639">
    <property type="entry name" value="Pest_crys_dom_I"/>
</dbReference>
<dbReference type="InterPro" id="IPR036716">
    <property type="entry name" value="Pest_crys_N_sf"/>
</dbReference>
<dbReference type="InterPro" id="IPR036399">
    <property type="entry name" value="Pest_cryst_cen_dom_sf"/>
</dbReference>
<dbReference type="InterPro" id="IPR001178">
    <property type="entry name" value="Pest_cryst_dom_II"/>
</dbReference>
<dbReference type="PANTHER" id="PTHR37003">
    <property type="entry name" value="ENDOTOXIN_N DOMAIN-CONTAINING PROTEIN-RELATED"/>
    <property type="match status" value="1"/>
</dbReference>
<dbReference type="PANTHER" id="PTHR37003:SF2">
    <property type="entry name" value="PESTICIDAL CRYSTAL PROTEIN N-TERMINAL DOMAIN-CONTAINING PROTEIN"/>
    <property type="match status" value="1"/>
</dbReference>
<dbReference type="Pfam" id="PF17997">
    <property type="entry name" value="Cry1Ac_D5"/>
    <property type="match status" value="1"/>
</dbReference>
<dbReference type="Pfam" id="PF21463">
    <property type="entry name" value="Cry1Ac_dom-VII"/>
    <property type="match status" value="1"/>
</dbReference>
<dbReference type="Pfam" id="PF03944">
    <property type="entry name" value="Endotoxin_C"/>
    <property type="match status" value="1"/>
</dbReference>
<dbReference type="Pfam" id="PF18449">
    <property type="entry name" value="Endotoxin_C2"/>
    <property type="match status" value="1"/>
</dbReference>
<dbReference type="Pfam" id="PF00555">
    <property type="entry name" value="Endotoxin_M"/>
    <property type="match status" value="1"/>
</dbReference>
<dbReference type="Pfam" id="PF03945">
    <property type="entry name" value="Endotoxin_N"/>
    <property type="match status" value="1"/>
</dbReference>
<dbReference type="SUPFAM" id="SSF51096">
    <property type="entry name" value="delta-Endotoxin (insectocide), middle domain"/>
    <property type="match status" value="1"/>
</dbReference>
<dbReference type="SUPFAM" id="SSF56849">
    <property type="entry name" value="delta-Endotoxin (insectocide), N-terminal domain"/>
    <property type="match status" value="1"/>
</dbReference>
<dbReference type="SUPFAM" id="SSF49785">
    <property type="entry name" value="Galactose-binding domain-like"/>
    <property type="match status" value="1"/>
</dbReference>
<sequence length="1172" mass="132981">MEIINNQNQYVPYNCLSNPENEILDIESLSSRSREQVAEISLGLTRFLLESLLPGASFGFALFDIIWGVIGPDQWNLFLAQIEQLIDQRIEAHVRNQAISRLEGLGDSYEVYIESLREWEASPNNEALQQDVRNRFSNTDNALITAIPILREQGFEIPLLSVYVQAANLHLSLLRDAVYFGQRWGLDTVTVNNHYNRLINLINTYSDHCAQWFNRGLDNFGGVSARYLDFQREVTISVLDIVALFPNYDIRTYPISTQSQLTREIYTSPVAEPGASLNANLQNILREPHLMDFLTRLVIYTGVQSGIYHWAGHEISSRTTGNLSSNIQFPLYGTAASADRAFNMNIHHSETIYRTLSAPIYSVSGGISPNRTRVVEGVRFLIARDNNLDSLPFLYRKEGTLDSFTELPPEDESTPPYIGYSHRLCHARFARSPVILEPSNFARLPVFSWTHRSASPTNEVSPSRITQIPWVKAHTLASGASVIKGPGFTGGDIMTRNNINLGDLGTLRVTVTGRLPQSYYIRLRYASVANSSGVFRHLPQPSYGISFPRTMGTDEPLTSRSFALTTLFTPITLTRAQEEFNLTIPRGVYIDRIEFVPVDATFEAGYDLERAQKAVNALFTSTNQRGLKTDITDYHIDQVSNLVECLSDEFCLDEKRELSEKVKHAKRLSDGRNLLQDRNFISINGLLDRGWRGSTDITIQGSDDVFKENYVTLPGTFDECYPTYLYQKIDESKLKAYTRYQLRGYIEDSQDLEIYLIRYNAKHEIVNVPGTGSLWPLSVENSIGPCGESNRCAPHLEWNPNLDCSCRDGEKCAHHSHHFSLDIDVGCTDLNEDLGVWVIFKIKTQDGHARIGNLEFLEEKPLVGEALARVKRAEKKWRDKRKKLEFETNIVYKEAKESVDALFVNSQYDKLKADTNIAMIHAADKRVHRIREAYLPELSVIPGVNADIFEELEGRIFTAYSLYDARNVIKNGDFNNGLLCWNVKGHVDVEEQNNHRSVLVVPEWEAEVSQEVRVCPGRGYILRVTAYKEGYGEGCVTIHEIEDNTDELKFSNCVEEEVYPSNTVTCNDYTANQEEYEGTYTSRNQGYDEAYESNSSVPANYASVYEEKAYTDGRRENSCEFNRGYRDYTPLPAGYVTKELEYFPGTAKVWIEIGETEGTFIVDSVELLLMEE</sequence>
<organism>
    <name type="scientific">Bacillus thuringiensis</name>
    <dbReference type="NCBI Taxonomy" id="1428"/>
    <lineage>
        <taxon>Bacteria</taxon>
        <taxon>Bacillati</taxon>
        <taxon>Bacillota</taxon>
        <taxon>Bacilli</taxon>
        <taxon>Bacillales</taxon>
        <taxon>Bacillaceae</taxon>
        <taxon>Bacillus</taxon>
        <taxon>Bacillus cereus group</taxon>
    </lineage>
</organism>